<gene>
    <name evidence="1" type="primary">aup1</name>
</gene>
<sequence>METRGIEQMFDFQRLPNDRFILLLLLLYAPVGFCLMLLRIFIGVHVFLVSCALPDSIVRRFIVRIMCSVLGLHVQQNSPRLRDKTTRLYVCNHVTHFDHNIINLLTSCNTPLLEGPVGFLCWARGFMELGQGVGSRTELTETLHRYCSSPDTLPLLLFPEEDTTNGRTGLLKFSSWPFSVSDSIQPVALLVKRPFIAVSTPESSWLTELLWTFFVPFTVYHVRWLPPLSKEDGETHQEFASKVQGLLATELGVISTQITKADKAEHIKRKRHSAPQTAHSNLGARPRTVAQGFLGTSVGAEDSRIARLAQQVKEVLPDVPVSVITRDLLQTNCVDTTITNLLERTDQFNSEAAMTMPSGPGKAAASSTPSAMVSSPNLKPAAKSFGRSPIDRHMSLQERKEALYEYARRRYIEKHGLNKEDDL</sequence>
<name>AUP1_DANRE</name>
<proteinExistence type="evidence at transcript level"/>
<evidence type="ECO:0000250" key="1">
    <source>
        <dbReference type="UniProtKB" id="Q9Y679"/>
    </source>
</evidence>
<evidence type="ECO:0000255" key="2">
    <source>
        <dbReference type="PROSITE-ProRule" id="PRU00468"/>
    </source>
</evidence>
<evidence type="ECO:0000256" key="3">
    <source>
        <dbReference type="SAM" id="MobiDB-lite"/>
    </source>
</evidence>
<evidence type="ECO:0000305" key="4"/>
<organism>
    <name type="scientific">Danio rerio</name>
    <name type="common">Zebrafish</name>
    <name type="synonym">Brachydanio rerio</name>
    <dbReference type="NCBI Taxonomy" id="7955"/>
    <lineage>
        <taxon>Eukaryota</taxon>
        <taxon>Metazoa</taxon>
        <taxon>Chordata</taxon>
        <taxon>Craniata</taxon>
        <taxon>Vertebrata</taxon>
        <taxon>Euteleostomi</taxon>
        <taxon>Actinopterygii</taxon>
        <taxon>Neopterygii</taxon>
        <taxon>Teleostei</taxon>
        <taxon>Ostariophysi</taxon>
        <taxon>Cypriniformes</taxon>
        <taxon>Danionidae</taxon>
        <taxon>Danioninae</taxon>
        <taxon>Danio</taxon>
    </lineage>
</organism>
<feature type="chain" id="PRO_0000359871" description="Lipid droplet-regulating VLDL assembly factor AUP1">
    <location>
        <begin position="1"/>
        <end position="423"/>
    </location>
</feature>
<feature type="topological domain" description="Cytoplasmic" evidence="1">
    <location>
        <begin position="1"/>
        <end position="19"/>
    </location>
</feature>
<feature type="intramembrane region" evidence="1">
    <location>
        <begin position="20"/>
        <end position="40"/>
    </location>
</feature>
<feature type="topological domain" description="Cytoplasmic" evidence="1">
    <location>
        <begin position="41"/>
        <end position="423"/>
    </location>
</feature>
<feature type="domain" description="CUE" evidence="2">
    <location>
        <begin position="304"/>
        <end position="346"/>
    </location>
</feature>
<feature type="region of interest" description="Disordered" evidence="3">
    <location>
        <begin position="355"/>
        <end position="392"/>
    </location>
</feature>
<feature type="compositionally biased region" description="Polar residues" evidence="3">
    <location>
        <begin position="365"/>
        <end position="377"/>
    </location>
</feature>
<feature type="sequence conflict" description="In Ref. 1; AAH59643." evidence="4" ref="1">
    <original>D</original>
    <variation>E</variation>
    <location>
        <position position="182"/>
    </location>
</feature>
<accession>Q6PBN5</accession>
<accession>Q6P0U2</accession>
<reference key="1">
    <citation type="submission" date="2004-01" db="EMBL/GenBank/DDBJ databases">
        <authorList>
            <consortium name="NIH - Zebrafish Gene Collection (ZGC) project"/>
        </authorList>
    </citation>
    <scope>NUCLEOTIDE SEQUENCE [LARGE SCALE MRNA]</scope>
    <source>
        <tissue>Eye</tissue>
    </source>
</reference>
<keyword id="KW-0256">Endoplasmic reticulum</keyword>
<keyword id="KW-0551">Lipid droplet</keyword>
<keyword id="KW-0472">Membrane</keyword>
<keyword id="KW-1185">Reference proteome</keyword>
<comment type="function">
    <text evidence="1">Plays a role in the translocation of terminally misfolded proteins from the endoplasmic reticulum lumen to the cytoplasm and their degradation by the proteasome (By similarity). Plays a role in lipid droplet formation (By similarity). Induces lipid droplet clustering (By similarity).</text>
</comment>
<comment type="subcellular location">
    <subcellularLocation>
        <location evidence="1">Endoplasmic reticulum membrane</location>
        <topology evidence="1">Peripheral membrane protein</topology>
    </subcellularLocation>
    <subcellularLocation>
        <location evidence="1">Lipid droplet</location>
    </subcellularLocation>
</comment>
<comment type="similarity">
    <text evidence="4">Belongs to the AUP1 family.</text>
</comment>
<dbReference type="EMBL" id="BC065447">
    <property type="protein sequence ID" value="AAH65447.1"/>
    <property type="molecule type" value="mRNA"/>
</dbReference>
<dbReference type="EMBL" id="BC059643">
    <property type="protein sequence ID" value="AAH59643.1"/>
    <property type="molecule type" value="mRNA"/>
</dbReference>
<dbReference type="RefSeq" id="NP_955984.2">
    <property type="nucleotide sequence ID" value="NM_199690.2"/>
</dbReference>
<dbReference type="SMR" id="Q6PBN5"/>
<dbReference type="FunCoup" id="Q6PBN5">
    <property type="interactions" value="966"/>
</dbReference>
<dbReference type="STRING" id="7955.ENSDARP00000054866"/>
<dbReference type="PaxDb" id="7955-ENSDARP00000054866"/>
<dbReference type="Ensembl" id="ENSDART00000054867">
    <property type="protein sequence ID" value="ENSDARP00000054866"/>
    <property type="gene ID" value="ENSDARG00000092609"/>
</dbReference>
<dbReference type="GeneID" id="324654"/>
<dbReference type="KEGG" id="dre:324654"/>
<dbReference type="AGR" id="ZFIN:ZDB-GENE-030131-3375"/>
<dbReference type="CTD" id="550"/>
<dbReference type="ZFIN" id="ZDB-GENE-030131-3375">
    <property type="gene designation" value="aup1"/>
</dbReference>
<dbReference type="eggNOG" id="KOG2898">
    <property type="taxonomic scope" value="Eukaryota"/>
</dbReference>
<dbReference type="HOGENOM" id="CLU_045696_0_0_1"/>
<dbReference type="InParanoid" id="Q6PBN5"/>
<dbReference type="OMA" id="KFNSWPF"/>
<dbReference type="OrthoDB" id="1854593at2759"/>
<dbReference type="PhylomeDB" id="Q6PBN5"/>
<dbReference type="TreeFam" id="TF313372"/>
<dbReference type="PRO" id="PR:Q6PBN5"/>
<dbReference type="Proteomes" id="UP000000437">
    <property type="component" value="Chromosome 14"/>
</dbReference>
<dbReference type="Bgee" id="ENSDARG00000092609">
    <property type="expression patterns" value="Expressed in muscle tissue and 28 other cell types or tissues"/>
</dbReference>
<dbReference type="ExpressionAtlas" id="Q6PBN5">
    <property type="expression patterns" value="baseline"/>
</dbReference>
<dbReference type="GO" id="GO:0005789">
    <property type="term" value="C:endoplasmic reticulum membrane"/>
    <property type="evidence" value="ECO:0000250"/>
    <property type="project" value="UniProtKB"/>
</dbReference>
<dbReference type="GO" id="GO:0005811">
    <property type="term" value="C:lipid droplet"/>
    <property type="evidence" value="ECO:0000250"/>
    <property type="project" value="UniProtKB"/>
</dbReference>
<dbReference type="GO" id="GO:0043130">
    <property type="term" value="F:ubiquitin binding"/>
    <property type="evidence" value="ECO:0007669"/>
    <property type="project" value="InterPro"/>
</dbReference>
<dbReference type="GO" id="GO:0036503">
    <property type="term" value="P:ERAD pathway"/>
    <property type="evidence" value="ECO:0000250"/>
    <property type="project" value="UniProtKB"/>
</dbReference>
<dbReference type="GO" id="GO:0140042">
    <property type="term" value="P:lipid droplet formation"/>
    <property type="evidence" value="ECO:0000250"/>
    <property type="project" value="UniProtKB"/>
</dbReference>
<dbReference type="GO" id="GO:0034389">
    <property type="term" value="P:lipid droplet organization"/>
    <property type="evidence" value="ECO:0000250"/>
    <property type="project" value="UniProtKB"/>
</dbReference>
<dbReference type="GO" id="GO:1990044">
    <property type="term" value="P:protein localization to lipid droplet"/>
    <property type="evidence" value="ECO:0000250"/>
    <property type="project" value="UniProtKB"/>
</dbReference>
<dbReference type="CDD" id="cd14420">
    <property type="entry name" value="CUE_AUP1"/>
    <property type="match status" value="1"/>
</dbReference>
<dbReference type="FunFam" id="1.10.8.10:FF:000049">
    <property type="entry name" value="ancient ubiquitous protein 1 isoform X2"/>
    <property type="match status" value="1"/>
</dbReference>
<dbReference type="Gene3D" id="1.10.8.10">
    <property type="entry name" value="DNA helicase RuvA subunit, C-terminal domain"/>
    <property type="match status" value="1"/>
</dbReference>
<dbReference type="InterPro" id="IPR048056">
    <property type="entry name" value="AUP1_CUE"/>
</dbReference>
<dbReference type="InterPro" id="IPR003892">
    <property type="entry name" value="CUE"/>
</dbReference>
<dbReference type="PANTHER" id="PTHR15486">
    <property type="entry name" value="ANCIENT UBIQUITOUS PROTEIN"/>
    <property type="match status" value="1"/>
</dbReference>
<dbReference type="PANTHER" id="PTHR15486:SF96">
    <property type="entry name" value="LIPID DROPLET-REGULATING VLDL ASSEMBLY FACTOR AUP1"/>
    <property type="match status" value="1"/>
</dbReference>
<dbReference type="Pfam" id="PF02845">
    <property type="entry name" value="CUE"/>
    <property type="match status" value="1"/>
</dbReference>
<dbReference type="SMART" id="SM00546">
    <property type="entry name" value="CUE"/>
    <property type="match status" value="1"/>
</dbReference>
<dbReference type="SUPFAM" id="SSF69593">
    <property type="entry name" value="Glycerol-3-phosphate (1)-acyltransferase"/>
    <property type="match status" value="1"/>
</dbReference>
<dbReference type="PROSITE" id="PS51140">
    <property type="entry name" value="CUE"/>
    <property type="match status" value="1"/>
</dbReference>
<protein>
    <recommendedName>
        <fullName evidence="1">Lipid droplet-regulating VLDL assembly factor AUP1</fullName>
    </recommendedName>
    <alternativeName>
        <fullName evidence="1">Ancient ubiquitous protein 1</fullName>
    </alternativeName>
</protein>